<feature type="chain" id="PRO_1000065387" description="Redox-sensing transcriptional repressor Rex">
    <location>
        <begin position="1"/>
        <end position="220"/>
    </location>
</feature>
<feature type="DNA-binding region" description="H-T-H motif" evidence="1">
    <location>
        <begin position="25"/>
        <end position="64"/>
    </location>
</feature>
<feature type="binding site" evidence="1">
    <location>
        <begin position="99"/>
        <end position="104"/>
    </location>
    <ligand>
        <name>NAD(+)</name>
        <dbReference type="ChEBI" id="CHEBI:57540"/>
    </ligand>
</feature>
<proteinExistence type="inferred from homology"/>
<accession>Q5L8X0</accession>
<protein>
    <recommendedName>
        <fullName evidence="1">Redox-sensing transcriptional repressor Rex</fullName>
    </recommendedName>
</protein>
<organism>
    <name type="scientific">Bacteroides fragilis (strain ATCC 25285 / DSM 2151 / CCUG 4856 / JCM 11019 / LMG 10263 / NCTC 9343 / Onslow / VPI 2553 / EN-2)</name>
    <dbReference type="NCBI Taxonomy" id="272559"/>
    <lineage>
        <taxon>Bacteria</taxon>
        <taxon>Pseudomonadati</taxon>
        <taxon>Bacteroidota</taxon>
        <taxon>Bacteroidia</taxon>
        <taxon>Bacteroidales</taxon>
        <taxon>Bacteroidaceae</taxon>
        <taxon>Bacteroides</taxon>
    </lineage>
</organism>
<evidence type="ECO:0000255" key="1">
    <source>
        <dbReference type="HAMAP-Rule" id="MF_01131"/>
    </source>
</evidence>
<reference key="1">
    <citation type="journal article" date="2005" name="Science">
        <title>Extensive DNA inversions in the B. fragilis genome control variable gene expression.</title>
        <authorList>
            <person name="Cerdeno-Tarraga A.-M."/>
            <person name="Patrick S."/>
            <person name="Crossman L.C."/>
            <person name="Blakely G."/>
            <person name="Abratt V."/>
            <person name="Lennard N."/>
            <person name="Poxton I."/>
            <person name="Duerden B."/>
            <person name="Harris B."/>
            <person name="Quail M.A."/>
            <person name="Barron A."/>
            <person name="Clark L."/>
            <person name="Corton C."/>
            <person name="Doggett J."/>
            <person name="Holden M.T.G."/>
            <person name="Larke N."/>
            <person name="Line A."/>
            <person name="Lord A."/>
            <person name="Norbertczak H."/>
            <person name="Ormond D."/>
            <person name="Price C."/>
            <person name="Rabbinowitsch E."/>
            <person name="Woodward J."/>
            <person name="Barrell B.G."/>
            <person name="Parkhill J."/>
        </authorList>
    </citation>
    <scope>NUCLEOTIDE SEQUENCE [LARGE SCALE GENOMIC DNA]</scope>
    <source>
        <strain>ATCC 25285 / DSM 2151 / CCUG 4856 / JCM 11019 / LMG 10263 / NCTC 9343 / Onslow / VPI 2553 / EN-2</strain>
    </source>
</reference>
<sequence length="220" mass="24530">MTMNNQIQHKDSTKVPEPTLRRLPWYLSNVKLLKQKGERYVSSTQISKEINIDASQIAKDLSYVNISGRTRVGYEVDALIAVLEDFLGFTNMHKAFLFGVGSLGGALLRDSGLSHFGLEIVAAFDVNPSLVGTTLNGIPIFHSDDFQKKMQEYGVHIGVLTVPIEIAQCITDTMVAGGIKAVWNFTPFRIRVPEDIVVQNTSLYAHLAVMFNRLNFNEIE</sequence>
<keyword id="KW-0963">Cytoplasm</keyword>
<keyword id="KW-0238">DNA-binding</keyword>
<keyword id="KW-0520">NAD</keyword>
<keyword id="KW-0678">Repressor</keyword>
<keyword id="KW-0804">Transcription</keyword>
<keyword id="KW-0805">Transcription regulation</keyword>
<name>REX_BACFN</name>
<comment type="function">
    <text evidence="1">Modulates transcription in response to changes in cellular NADH/NAD(+) redox state.</text>
</comment>
<comment type="subunit">
    <text evidence="1">Homodimer.</text>
</comment>
<comment type="subcellular location">
    <subcellularLocation>
        <location evidence="1">Cytoplasm</location>
    </subcellularLocation>
</comment>
<comment type="similarity">
    <text evidence="1">Belongs to the transcriptional regulatory Rex family.</text>
</comment>
<gene>
    <name evidence="1" type="primary">rex</name>
    <name type="ordered locus">BF3782</name>
</gene>
<dbReference type="EMBL" id="CR626927">
    <property type="protein sequence ID" value="CAH09462.1"/>
    <property type="molecule type" value="Genomic_DNA"/>
</dbReference>
<dbReference type="SMR" id="Q5L8X0"/>
<dbReference type="PaxDb" id="272559-BF9343_3681"/>
<dbReference type="KEGG" id="bfs:BF9343_3681"/>
<dbReference type="eggNOG" id="COG2344">
    <property type="taxonomic scope" value="Bacteria"/>
</dbReference>
<dbReference type="HOGENOM" id="CLU_061534_1_0_10"/>
<dbReference type="Proteomes" id="UP000006731">
    <property type="component" value="Chromosome"/>
</dbReference>
<dbReference type="GO" id="GO:0005737">
    <property type="term" value="C:cytoplasm"/>
    <property type="evidence" value="ECO:0007669"/>
    <property type="project" value="UniProtKB-SubCell"/>
</dbReference>
<dbReference type="GO" id="GO:0003677">
    <property type="term" value="F:DNA binding"/>
    <property type="evidence" value="ECO:0007669"/>
    <property type="project" value="UniProtKB-UniRule"/>
</dbReference>
<dbReference type="GO" id="GO:0003700">
    <property type="term" value="F:DNA-binding transcription factor activity"/>
    <property type="evidence" value="ECO:0007669"/>
    <property type="project" value="UniProtKB-UniRule"/>
</dbReference>
<dbReference type="GO" id="GO:0045892">
    <property type="term" value="P:negative regulation of DNA-templated transcription"/>
    <property type="evidence" value="ECO:0007669"/>
    <property type="project" value="InterPro"/>
</dbReference>
<dbReference type="GO" id="GO:0051775">
    <property type="term" value="P:response to redox state"/>
    <property type="evidence" value="ECO:0007669"/>
    <property type="project" value="InterPro"/>
</dbReference>
<dbReference type="Gene3D" id="3.40.50.720">
    <property type="entry name" value="NAD(P)-binding Rossmann-like Domain"/>
    <property type="match status" value="1"/>
</dbReference>
<dbReference type="Gene3D" id="1.10.10.10">
    <property type="entry name" value="Winged helix-like DNA-binding domain superfamily/Winged helix DNA-binding domain"/>
    <property type="match status" value="1"/>
</dbReference>
<dbReference type="HAMAP" id="MF_01131">
    <property type="entry name" value="Rex"/>
    <property type="match status" value="1"/>
</dbReference>
<dbReference type="InterPro" id="IPR003781">
    <property type="entry name" value="CoA-bd"/>
</dbReference>
<dbReference type="InterPro" id="IPR036291">
    <property type="entry name" value="NAD(P)-bd_dom_sf"/>
</dbReference>
<dbReference type="InterPro" id="IPR009718">
    <property type="entry name" value="Rex_DNA-bd_C_dom"/>
</dbReference>
<dbReference type="InterPro" id="IPR022876">
    <property type="entry name" value="Tscrpt_rep_Rex"/>
</dbReference>
<dbReference type="InterPro" id="IPR036388">
    <property type="entry name" value="WH-like_DNA-bd_sf"/>
</dbReference>
<dbReference type="InterPro" id="IPR036390">
    <property type="entry name" value="WH_DNA-bd_sf"/>
</dbReference>
<dbReference type="NCBIfam" id="NF003994">
    <property type="entry name" value="PRK05472.2-3"/>
    <property type="match status" value="1"/>
</dbReference>
<dbReference type="NCBIfam" id="NF003995">
    <property type="entry name" value="PRK05472.2-4"/>
    <property type="match status" value="1"/>
</dbReference>
<dbReference type="NCBIfam" id="NF003996">
    <property type="entry name" value="PRK05472.2-5"/>
    <property type="match status" value="1"/>
</dbReference>
<dbReference type="PANTHER" id="PTHR35786">
    <property type="entry name" value="REDOX-SENSING TRANSCRIPTIONAL REPRESSOR REX"/>
    <property type="match status" value="1"/>
</dbReference>
<dbReference type="PANTHER" id="PTHR35786:SF1">
    <property type="entry name" value="REDOX-SENSING TRANSCRIPTIONAL REPRESSOR REX 1"/>
    <property type="match status" value="1"/>
</dbReference>
<dbReference type="Pfam" id="PF02629">
    <property type="entry name" value="CoA_binding"/>
    <property type="match status" value="1"/>
</dbReference>
<dbReference type="Pfam" id="PF06971">
    <property type="entry name" value="Put_DNA-bind_N"/>
    <property type="match status" value="1"/>
</dbReference>
<dbReference type="SMART" id="SM00881">
    <property type="entry name" value="CoA_binding"/>
    <property type="match status" value="1"/>
</dbReference>
<dbReference type="SUPFAM" id="SSF51735">
    <property type="entry name" value="NAD(P)-binding Rossmann-fold domains"/>
    <property type="match status" value="1"/>
</dbReference>
<dbReference type="SUPFAM" id="SSF46785">
    <property type="entry name" value="Winged helix' DNA-binding domain"/>
    <property type="match status" value="1"/>
</dbReference>